<organism>
    <name type="scientific">Escherichia coli O6:K15:H31 (strain 536 / UPEC)</name>
    <dbReference type="NCBI Taxonomy" id="362663"/>
    <lineage>
        <taxon>Bacteria</taxon>
        <taxon>Pseudomonadati</taxon>
        <taxon>Pseudomonadota</taxon>
        <taxon>Gammaproteobacteria</taxon>
        <taxon>Enterobacterales</taxon>
        <taxon>Enterobacteriaceae</taxon>
        <taxon>Escherichia</taxon>
    </lineage>
</organism>
<evidence type="ECO:0000255" key="1">
    <source>
        <dbReference type="HAMAP-Rule" id="MF_01552"/>
    </source>
</evidence>
<name>RIMK_ECOL5</name>
<keyword id="KW-0067">ATP-binding</keyword>
<keyword id="KW-0436">Ligase</keyword>
<keyword id="KW-0460">Magnesium</keyword>
<keyword id="KW-0464">Manganese</keyword>
<keyword id="KW-0479">Metal-binding</keyword>
<keyword id="KW-0547">Nucleotide-binding</keyword>
<keyword id="KW-0648">Protein biosynthesis</keyword>
<dbReference type="EC" id="6.3.2.-" evidence="1"/>
<dbReference type="EMBL" id="CP000247">
    <property type="protein sequence ID" value="ABG68883.1"/>
    <property type="molecule type" value="Genomic_DNA"/>
</dbReference>
<dbReference type="RefSeq" id="WP_000684321.1">
    <property type="nucleotide sequence ID" value="NC_008253.1"/>
</dbReference>
<dbReference type="SMR" id="Q0TJJ6"/>
<dbReference type="GeneID" id="93776570"/>
<dbReference type="KEGG" id="ecp:ECP_0866"/>
<dbReference type="HOGENOM" id="CLU_054353_0_1_6"/>
<dbReference type="Proteomes" id="UP000009182">
    <property type="component" value="Chromosome"/>
</dbReference>
<dbReference type="GO" id="GO:0005737">
    <property type="term" value="C:cytoplasm"/>
    <property type="evidence" value="ECO:0007669"/>
    <property type="project" value="TreeGrafter"/>
</dbReference>
<dbReference type="GO" id="GO:0005524">
    <property type="term" value="F:ATP binding"/>
    <property type="evidence" value="ECO:0007669"/>
    <property type="project" value="UniProtKB-UniRule"/>
</dbReference>
<dbReference type="GO" id="GO:0046872">
    <property type="term" value="F:metal ion binding"/>
    <property type="evidence" value="ECO:0007669"/>
    <property type="project" value="UniProtKB-KW"/>
</dbReference>
<dbReference type="GO" id="GO:0018169">
    <property type="term" value="F:ribosomal S6-glutamic acid ligase activity"/>
    <property type="evidence" value="ECO:0007669"/>
    <property type="project" value="UniProtKB-UniRule"/>
</dbReference>
<dbReference type="GO" id="GO:0036211">
    <property type="term" value="P:protein modification process"/>
    <property type="evidence" value="ECO:0007669"/>
    <property type="project" value="InterPro"/>
</dbReference>
<dbReference type="GO" id="GO:0009432">
    <property type="term" value="P:SOS response"/>
    <property type="evidence" value="ECO:0007669"/>
    <property type="project" value="TreeGrafter"/>
</dbReference>
<dbReference type="GO" id="GO:0006412">
    <property type="term" value="P:translation"/>
    <property type="evidence" value="ECO:0007669"/>
    <property type="project" value="UniProtKB-KW"/>
</dbReference>
<dbReference type="FunFam" id="3.40.50.20:FF:000004">
    <property type="entry name" value="Probable alpha-L-glutamate ligase"/>
    <property type="match status" value="1"/>
</dbReference>
<dbReference type="FunFam" id="3.30.1490.20:FF:000005">
    <property type="entry name" value="Probable alpha-L-glutamate ligase 1"/>
    <property type="match status" value="1"/>
</dbReference>
<dbReference type="FunFam" id="3.30.470.20:FF:000016">
    <property type="entry name" value="Ribosomal protein S6--L-glutamate ligase"/>
    <property type="match status" value="1"/>
</dbReference>
<dbReference type="Gene3D" id="3.40.50.20">
    <property type="match status" value="1"/>
</dbReference>
<dbReference type="Gene3D" id="3.30.1490.20">
    <property type="entry name" value="ATP-grasp fold, A domain"/>
    <property type="match status" value="1"/>
</dbReference>
<dbReference type="Gene3D" id="3.30.470.20">
    <property type="entry name" value="ATP-grasp fold, B domain"/>
    <property type="match status" value="1"/>
</dbReference>
<dbReference type="HAMAP" id="MF_01552">
    <property type="entry name" value="RimK"/>
    <property type="match status" value="1"/>
</dbReference>
<dbReference type="InterPro" id="IPR011761">
    <property type="entry name" value="ATP-grasp"/>
</dbReference>
<dbReference type="InterPro" id="IPR013651">
    <property type="entry name" value="ATP-grasp_RimK-type"/>
</dbReference>
<dbReference type="InterPro" id="IPR013815">
    <property type="entry name" value="ATP_grasp_subdomain_1"/>
</dbReference>
<dbReference type="InterPro" id="IPR023533">
    <property type="entry name" value="RimK"/>
</dbReference>
<dbReference type="InterPro" id="IPR041107">
    <property type="entry name" value="Rimk_N"/>
</dbReference>
<dbReference type="InterPro" id="IPR004666">
    <property type="entry name" value="Rp_bS6_RimK/Lys_biosynth_LsyX"/>
</dbReference>
<dbReference type="NCBIfam" id="NF007764">
    <property type="entry name" value="PRK10446.1"/>
    <property type="match status" value="1"/>
</dbReference>
<dbReference type="NCBIfam" id="TIGR00768">
    <property type="entry name" value="rimK_fam"/>
    <property type="match status" value="1"/>
</dbReference>
<dbReference type="PANTHER" id="PTHR21621:SF7">
    <property type="entry name" value="RIBOSOMAL PROTEIN BS6--L-GLUTAMATE LIGASE"/>
    <property type="match status" value="1"/>
</dbReference>
<dbReference type="PANTHER" id="PTHR21621">
    <property type="entry name" value="RIBOSOMAL PROTEIN S6 MODIFICATION PROTEIN"/>
    <property type="match status" value="1"/>
</dbReference>
<dbReference type="Pfam" id="PF08443">
    <property type="entry name" value="RimK"/>
    <property type="match status" value="1"/>
</dbReference>
<dbReference type="Pfam" id="PF18030">
    <property type="entry name" value="Rimk_N"/>
    <property type="match status" value="1"/>
</dbReference>
<dbReference type="SUPFAM" id="SSF56059">
    <property type="entry name" value="Glutathione synthetase ATP-binding domain-like"/>
    <property type="match status" value="1"/>
</dbReference>
<dbReference type="PROSITE" id="PS50975">
    <property type="entry name" value="ATP_GRASP"/>
    <property type="match status" value="1"/>
</dbReference>
<reference key="1">
    <citation type="journal article" date="2006" name="Mol. Microbiol.">
        <title>Role of pathogenicity island-associated integrases in the genome plasticity of uropathogenic Escherichia coli strain 536.</title>
        <authorList>
            <person name="Hochhut B."/>
            <person name="Wilde C."/>
            <person name="Balling G."/>
            <person name="Middendorf B."/>
            <person name="Dobrindt U."/>
            <person name="Brzuszkiewicz E."/>
            <person name="Gottschalk G."/>
            <person name="Carniel E."/>
            <person name="Hacker J."/>
        </authorList>
    </citation>
    <scope>NUCLEOTIDE SEQUENCE [LARGE SCALE GENOMIC DNA]</scope>
    <source>
        <strain>536 / UPEC</strain>
    </source>
</reference>
<accession>Q0TJJ6</accession>
<sequence length="300" mass="32436">MKIAILSRDGTLYSCKRLREAAIQRGHLVEILDPLSCYMNINPAASSIHYKGRKLPHFDAVIPRIGTAITFYGTAALRQFEMLGSYPLNESVAIARARDKLRSMQLLARQGIDLPVTGIAHSPDDTSDLIDMVGGAPLVVKLVEGTQGIGVVLAETRQAAESVIDAFRGLNAHILVQEYIKEAQGCDIRCLVVGDEVVAAIERRAKEGDFRSNLHRGGAASVASITPQEREIAIKAARTMALDVAGVDILRANRGPLVMEVNASPGLEGIEKTTGIDIAGKMIRWIERHATTEYCLKTGG</sequence>
<proteinExistence type="inferred from homology"/>
<comment type="function">
    <text evidence="1">An L-glutamate ligase that catalyzes the ATP-dependent post-translational addition of glutamate residues to the C-terminus of ribosomal protein bS6 (RpsF). Is also able to catalyze the synthesis of poly-alpha-glutamate in vitro, via ATP hydrolysis from unprotected glutamate as substrate. The number of glutamate residues added to either RpsF or to poly-alpha-glutamate changes with pH.</text>
</comment>
<comment type="cofactor">
    <cofactor evidence="1">
        <name>Mg(2+)</name>
        <dbReference type="ChEBI" id="CHEBI:18420"/>
    </cofactor>
    <cofactor evidence="1">
        <name>Mn(2+)</name>
        <dbReference type="ChEBI" id="CHEBI:29035"/>
    </cofactor>
    <text evidence="1">Binds 2 magnesium or manganese ions per subunit.</text>
</comment>
<comment type="similarity">
    <text evidence="1">Belongs to the RimK family.</text>
</comment>
<feature type="chain" id="PRO_1000068837" description="Ribosomal protein bS6--L-glutamate ligase">
    <location>
        <begin position="1"/>
        <end position="300"/>
    </location>
</feature>
<feature type="domain" description="ATP-grasp" evidence="1">
    <location>
        <begin position="104"/>
        <end position="287"/>
    </location>
</feature>
<feature type="binding site" evidence="1">
    <location>
        <position position="141"/>
    </location>
    <ligand>
        <name>ATP</name>
        <dbReference type="ChEBI" id="CHEBI:30616"/>
    </ligand>
</feature>
<feature type="binding site" evidence="1">
    <location>
        <begin position="178"/>
        <end position="179"/>
    </location>
    <ligand>
        <name>ATP</name>
        <dbReference type="ChEBI" id="CHEBI:30616"/>
    </ligand>
</feature>
<feature type="binding site" evidence="1">
    <location>
        <position position="187"/>
    </location>
    <ligand>
        <name>ATP</name>
        <dbReference type="ChEBI" id="CHEBI:30616"/>
    </ligand>
</feature>
<feature type="binding site" evidence="1">
    <location>
        <begin position="211"/>
        <end position="213"/>
    </location>
    <ligand>
        <name>ATP</name>
        <dbReference type="ChEBI" id="CHEBI:30616"/>
    </ligand>
</feature>
<feature type="binding site" evidence="1">
    <location>
        <position position="248"/>
    </location>
    <ligand>
        <name>Mg(2+)</name>
        <dbReference type="ChEBI" id="CHEBI:18420"/>
        <label>1</label>
    </ligand>
</feature>
<feature type="binding site" evidence="1">
    <location>
        <position position="248"/>
    </location>
    <ligand>
        <name>Mn(2+)</name>
        <dbReference type="ChEBI" id="CHEBI:29035"/>
        <label>1</label>
    </ligand>
</feature>
<feature type="binding site" evidence="1">
    <location>
        <position position="260"/>
    </location>
    <ligand>
        <name>Mg(2+)</name>
        <dbReference type="ChEBI" id="CHEBI:18420"/>
        <label>1</label>
    </ligand>
</feature>
<feature type="binding site" evidence="1">
    <location>
        <position position="260"/>
    </location>
    <ligand>
        <name>Mg(2+)</name>
        <dbReference type="ChEBI" id="CHEBI:18420"/>
        <label>2</label>
    </ligand>
</feature>
<feature type="binding site" evidence="1">
    <location>
        <position position="260"/>
    </location>
    <ligand>
        <name>Mn(2+)</name>
        <dbReference type="ChEBI" id="CHEBI:29035"/>
        <label>1</label>
    </ligand>
</feature>
<feature type="binding site" evidence="1">
    <location>
        <position position="260"/>
    </location>
    <ligand>
        <name>Mn(2+)</name>
        <dbReference type="ChEBI" id="CHEBI:29035"/>
        <label>2</label>
    </ligand>
</feature>
<feature type="binding site" evidence="1">
    <location>
        <position position="262"/>
    </location>
    <ligand>
        <name>Mg(2+)</name>
        <dbReference type="ChEBI" id="CHEBI:18420"/>
        <label>2</label>
    </ligand>
</feature>
<feature type="binding site" evidence="1">
    <location>
        <position position="262"/>
    </location>
    <ligand>
        <name>Mn(2+)</name>
        <dbReference type="ChEBI" id="CHEBI:29035"/>
        <label>2</label>
    </ligand>
</feature>
<protein>
    <recommendedName>
        <fullName evidence="1">Ribosomal protein bS6--L-glutamate ligase</fullName>
        <ecNumber evidence="1">6.3.2.-</ecNumber>
    </recommendedName>
    <alternativeName>
        <fullName evidence="1">Poly-alpha-glutamate synthase</fullName>
    </alternativeName>
    <alternativeName>
        <fullName evidence="1">Ribosomal protein bS6 modification protein</fullName>
    </alternativeName>
</protein>
<gene>
    <name evidence="1" type="primary">rimK</name>
    <name type="ordered locus">ECP_0866</name>
</gene>